<evidence type="ECO:0000255" key="1"/>
<evidence type="ECO:0000255" key="2">
    <source>
        <dbReference type="PROSITE-ProRule" id="PRU00521"/>
    </source>
</evidence>
<evidence type="ECO:0000269" key="3">
    <source>
    </source>
</evidence>
<evidence type="ECO:0000269" key="4">
    <source>
    </source>
</evidence>
<organism>
    <name type="scientific">Homo sapiens</name>
    <name type="common">Human</name>
    <dbReference type="NCBI Taxonomy" id="9606"/>
    <lineage>
        <taxon>Eukaryota</taxon>
        <taxon>Metazoa</taxon>
        <taxon>Chordata</taxon>
        <taxon>Craniata</taxon>
        <taxon>Vertebrata</taxon>
        <taxon>Euteleostomi</taxon>
        <taxon>Mammalia</taxon>
        <taxon>Eutheria</taxon>
        <taxon>Euarchontoglires</taxon>
        <taxon>Primates</taxon>
        <taxon>Haplorrhini</taxon>
        <taxon>Catarrhini</taxon>
        <taxon>Hominidae</taxon>
        <taxon>Homo</taxon>
    </lineage>
</organism>
<dbReference type="EMBL" id="EU049291">
    <property type="protein sequence ID" value="ABV66282.1"/>
    <property type="molecule type" value="Genomic_DNA"/>
</dbReference>
<dbReference type="EMBL" id="EU049292">
    <property type="protein sequence ID" value="ABV66283.1"/>
    <property type="molecule type" value="Genomic_DNA"/>
</dbReference>
<dbReference type="EMBL" id="EU049293">
    <property type="protein sequence ID" value="ABV66284.1"/>
    <property type="molecule type" value="Genomic_DNA"/>
</dbReference>
<dbReference type="EMBL" id="EU049294">
    <property type="protein sequence ID" value="ABV66285.1"/>
    <property type="molecule type" value="Genomic_DNA"/>
</dbReference>
<dbReference type="EMBL" id="AB065929">
    <property type="protein sequence ID" value="BAC06144.1"/>
    <property type="molecule type" value="Genomic_DNA"/>
</dbReference>
<dbReference type="EMBL" id="CH471106">
    <property type="protein sequence ID" value="EAW84021.1"/>
    <property type="molecule type" value="Genomic_DNA"/>
</dbReference>
<dbReference type="EMBL" id="BC137147">
    <property type="protein sequence ID" value="AAI37148.1"/>
    <property type="molecule type" value="mRNA"/>
</dbReference>
<dbReference type="EMBL" id="BC137162">
    <property type="protein sequence ID" value="AAI37163.1"/>
    <property type="molecule type" value="mRNA"/>
</dbReference>
<dbReference type="EMBL" id="BK004226">
    <property type="protein sequence ID" value="DAA04624.1"/>
    <property type="molecule type" value="Genomic_DNA"/>
</dbReference>
<dbReference type="CCDS" id="CCDS32901.1"/>
<dbReference type="RefSeq" id="NP_001005191.1">
    <property type="nucleotide sequence ID" value="NM_001005191.3"/>
</dbReference>
<dbReference type="SMR" id="Q8NG98"/>
<dbReference type="BioGRID" id="125937">
    <property type="interactions" value="3"/>
</dbReference>
<dbReference type="FunCoup" id="Q8NG98">
    <property type="interactions" value="468"/>
</dbReference>
<dbReference type="IntAct" id="Q8NG98">
    <property type="interactions" value="3"/>
</dbReference>
<dbReference type="STRING" id="9606.ENSP00000493404"/>
<dbReference type="GlyCosmos" id="Q8NG98">
    <property type="glycosylation" value="1 site, No reported glycans"/>
</dbReference>
<dbReference type="GlyGen" id="Q8NG98">
    <property type="glycosylation" value="1 site"/>
</dbReference>
<dbReference type="BioMuta" id="OR7D4"/>
<dbReference type="DMDM" id="71153032"/>
<dbReference type="MassIVE" id="Q8NG98"/>
<dbReference type="PaxDb" id="9606-ENSP00000310488"/>
<dbReference type="Antibodypedia" id="42767">
    <property type="antibodies" value="44 antibodies from 19 providers"/>
</dbReference>
<dbReference type="DNASU" id="125958"/>
<dbReference type="Ensembl" id="ENST00000308682.3">
    <property type="protein sequence ID" value="ENSP00000310488.2"/>
    <property type="gene ID" value="ENSG00000174667.4"/>
</dbReference>
<dbReference type="Ensembl" id="ENST00000641244.1">
    <property type="protein sequence ID" value="ENSP00000493404.1"/>
    <property type="gene ID" value="ENSG00000174667.4"/>
</dbReference>
<dbReference type="Ensembl" id="ENST00000641669.1">
    <property type="protein sequence ID" value="ENSP00000493383.1"/>
    <property type="gene ID" value="ENSG00000174667.4"/>
</dbReference>
<dbReference type="GeneID" id="125958"/>
<dbReference type="KEGG" id="hsa:125958"/>
<dbReference type="MANE-Select" id="ENST00000641669.1">
    <property type="protein sequence ID" value="ENSP00000493383.1"/>
    <property type="RefSeq nucleotide sequence ID" value="NM_001005191.3"/>
    <property type="RefSeq protein sequence ID" value="NP_001005191.1"/>
</dbReference>
<dbReference type="UCSC" id="uc002mla.2">
    <property type="organism name" value="human"/>
</dbReference>
<dbReference type="AGR" id="HGNC:8380"/>
<dbReference type="CTD" id="125958"/>
<dbReference type="DisGeNET" id="125958"/>
<dbReference type="GeneCards" id="OR7D4"/>
<dbReference type="HGNC" id="HGNC:8380">
    <property type="gene designation" value="OR7D4"/>
</dbReference>
<dbReference type="HPA" id="ENSG00000174667">
    <property type="expression patterns" value="Not detected"/>
</dbReference>
<dbReference type="MIM" id="611538">
    <property type="type" value="gene"/>
</dbReference>
<dbReference type="neXtProt" id="NX_Q8NG98"/>
<dbReference type="OpenTargets" id="ENSG00000174667"/>
<dbReference type="PharmGKB" id="PA32628"/>
<dbReference type="VEuPathDB" id="HostDB:ENSG00000174667"/>
<dbReference type="eggNOG" id="ENOG502QVH7">
    <property type="taxonomic scope" value="Eukaryota"/>
</dbReference>
<dbReference type="GeneTree" id="ENSGT00940000153686"/>
<dbReference type="HOGENOM" id="CLU_012526_1_0_1"/>
<dbReference type="InParanoid" id="Q8NG98"/>
<dbReference type="OMA" id="ISTEVPH"/>
<dbReference type="OrthoDB" id="9444602at2759"/>
<dbReference type="PAN-GO" id="Q8NG98">
    <property type="GO annotations" value="3 GO annotations based on evolutionary models"/>
</dbReference>
<dbReference type="PhylomeDB" id="Q8NG98"/>
<dbReference type="TreeFam" id="TF337210"/>
<dbReference type="PathwayCommons" id="Q8NG98"/>
<dbReference type="Reactome" id="R-HSA-381753">
    <property type="pathway name" value="Olfactory Signaling Pathway"/>
</dbReference>
<dbReference type="Reactome" id="R-HSA-9752946">
    <property type="pathway name" value="Expression and translocation of olfactory receptors"/>
</dbReference>
<dbReference type="SignaLink" id="Q8NG98"/>
<dbReference type="BioGRID-ORCS" id="125958">
    <property type="hits" value="197 hits in 694 CRISPR screens"/>
</dbReference>
<dbReference type="GeneWiki" id="OR7D4"/>
<dbReference type="GenomeRNAi" id="125958"/>
<dbReference type="Pharos" id="Q8NG98">
    <property type="development level" value="Tbio"/>
</dbReference>
<dbReference type="PRO" id="PR:Q8NG98"/>
<dbReference type="Proteomes" id="UP000005640">
    <property type="component" value="Chromosome 19"/>
</dbReference>
<dbReference type="RNAct" id="Q8NG98">
    <property type="molecule type" value="protein"/>
</dbReference>
<dbReference type="Bgee" id="ENSG00000174667">
    <property type="expression patterns" value="Expressed in ganglionic eminence and 1 other cell type or tissue"/>
</dbReference>
<dbReference type="ExpressionAtlas" id="Q8NG98">
    <property type="expression patterns" value="baseline and differential"/>
</dbReference>
<dbReference type="GO" id="GO:0005886">
    <property type="term" value="C:plasma membrane"/>
    <property type="evidence" value="ECO:0000318"/>
    <property type="project" value="GO_Central"/>
</dbReference>
<dbReference type="GO" id="GO:0004930">
    <property type="term" value="F:G protein-coupled receptor activity"/>
    <property type="evidence" value="ECO:0007669"/>
    <property type="project" value="UniProtKB-KW"/>
</dbReference>
<dbReference type="GO" id="GO:0004984">
    <property type="term" value="F:olfactory receptor activity"/>
    <property type="evidence" value="ECO:0000318"/>
    <property type="project" value="GO_Central"/>
</dbReference>
<dbReference type="GO" id="GO:0007165">
    <property type="term" value="P:signal transduction"/>
    <property type="evidence" value="ECO:0000318"/>
    <property type="project" value="GO_Central"/>
</dbReference>
<dbReference type="CDD" id="cd15234">
    <property type="entry name" value="7tmA_OR7-like"/>
    <property type="match status" value="1"/>
</dbReference>
<dbReference type="FunFam" id="1.20.1070.10:FF:000009">
    <property type="entry name" value="Olfactory receptor"/>
    <property type="match status" value="1"/>
</dbReference>
<dbReference type="Gene3D" id="1.20.1070.10">
    <property type="entry name" value="Rhodopsin 7-helix transmembrane proteins"/>
    <property type="match status" value="1"/>
</dbReference>
<dbReference type="InterPro" id="IPR000276">
    <property type="entry name" value="GPCR_Rhodpsn"/>
</dbReference>
<dbReference type="InterPro" id="IPR017452">
    <property type="entry name" value="GPCR_Rhodpsn_7TM"/>
</dbReference>
<dbReference type="InterPro" id="IPR000725">
    <property type="entry name" value="Olfact_rcpt"/>
</dbReference>
<dbReference type="PANTHER" id="PTHR48001">
    <property type="entry name" value="OLFACTORY RECEPTOR"/>
    <property type="match status" value="1"/>
</dbReference>
<dbReference type="Pfam" id="PF13853">
    <property type="entry name" value="7tm_4"/>
    <property type="match status" value="1"/>
</dbReference>
<dbReference type="PRINTS" id="PR00237">
    <property type="entry name" value="GPCRRHODOPSN"/>
</dbReference>
<dbReference type="PRINTS" id="PR00245">
    <property type="entry name" value="OLFACTORYR"/>
</dbReference>
<dbReference type="SUPFAM" id="SSF81321">
    <property type="entry name" value="Family A G protein-coupled receptor-like"/>
    <property type="match status" value="1"/>
</dbReference>
<dbReference type="PROSITE" id="PS00237">
    <property type="entry name" value="G_PROTEIN_RECEP_F1_1"/>
    <property type="match status" value="1"/>
</dbReference>
<dbReference type="PROSITE" id="PS50262">
    <property type="entry name" value="G_PROTEIN_RECEP_F1_2"/>
    <property type="match status" value="1"/>
</dbReference>
<feature type="chain" id="PRO_0000150649" description="Olfactory receptor 7D4">
    <location>
        <begin position="1"/>
        <end position="312"/>
    </location>
</feature>
<feature type="topological domain" description="Extracellular" evidence="1">
    <location>
        <begin position="1"/>
        <end position="25"/>
    </location>
</feature>
<feature type="transmembrane region" description="Helical; Name=1" evidence="1">
    <location>
        <begin position="26"/>
        <end position="46"/>
    </location>
</feature>
<feature type="topological domain" description="Cytoplasmic" evidence="1">
    <location>
        <begin position="47"/>
        <end position="54"/>
    </location>
</feature>
<feature type="transmembrane region" description="Helical; Name=2" evidence="1">
    <location>
        <begin position="55"/>
        <end position="75"/>
    </location>
</feature>
<feature type="topological domain" description="Extracellular" evidence="1">
    <location>
        <begin position="76"/>
        <end position="99"/>
    </location>
</feature>
<feature type="transmembrane region" description="Helical; Name=3" evidence="1">
    <location>
        <begin position="100"/>
        <end position="120"/>
    </location>
</feature>
<feature type="topological domain" description="Cytoplasmic" evidence="1">
    <location>
        <begin position="121"/>
        <end position="139"/>
    </location>
</feature>
<feature type="transmembrane region" description="Helical; Name=4" evidence="1">
    <location>
        <begin position="140"/>
        <end position="160"/>
    </location>
</feature>
<feature type="topological domain" description="Extracellular" evidence="1">
    <location>
        <begin position="161"/>
        <end position="197"/>
    </location>
</feature>
<feature type="transmembrane region" description="Helical; Name=5" evidence="1">
    <location>
        <begin position="198"/>
        <end position="217"/>
    </location>
</feature>
<feature type="topological domain" description="Cytoplasmic" evidence="1">
    <location>
        <begin position="218"/>
        <end position="237"/>
    </location>
</feature>
<feature type="transmembrane region" description="Helical; Name=6" evidence="1">
    <location>
        <begin position="238"/>
        <end position="258"/>
    </location>
</feature>
<feature type="topological domain" description="Extracellular" evidence="1">
    <location>
        <begin position="259"/>
        <end position="271"/>
    </location>
</feature>
<feature type="transmembrane region" description="Helical; Name=7" evidence="1">
    <location>
        <begin position="272"/>
        <end position="292"/>
    </location>
</feature>
<feature type="topological domain" description="Cytoplasmic" evidence="1">
    <location>
        <begin position="293"/>
        <end position="312"/>
    </location>
</feature>
<feature type="glycosylation site" description="N-linked (GlcNAc...) asparagine" evidence="1">
    <location>
        <position position="5"/>
    </location>
</feature>
<feature type="disulfide bond" evidence="2">
    <location>
        <begin position="97"/>
        <end position="189"/>
    </location>
</feature>
<feature type="sequence variant" id="VAR_062056" description="In dbSNP:rs57568862.">
    <original>L</original>
    <variation>F</variation>
    <location>
        <position position="17"/>
    </location>
</feature>
<feature type="sequence variant" id="VAR_037778" description="In dbSNP:rs144165121." evidence="4">
    <original>D</original>
    <variation>G</variation>
    <location>
        <position position="52"/>
    </location>
</feature>
<feature type="sequence variant" id="VAR_037779" description="In dbSNP:rs778417216." evidence="4">
    <original>S</original>
    <variation>C</variation>
    <location>
        <position position="75"/>
    </location>
</feature>
<feature type="sequence variant" id="VAR_037780" description="Impaired response to androstenone and androstadienone; dbSNP:rs61732668." evidence="4">
    <original>P</original>
    <variation>L</variation>
    <location>
        <position position="79"/>
    </location>
</feature>
<feature type="sequence variant" id="VAR_037781" description="High sensitivity to androstenone and androstadienone; dbSNP:rs5020280." evidence="4">
    <original>S</original>
    <variation>N</variation>
    <location>
        <position position="84"/>
    </location>
</feature>
<feature type="sequence variant" id="VAR_037782" description="Impaired response to androstenone and androstadienone; when associated in cis with M-133; dbSNP:rs61729907." evidence="4">
    <original>R</original>
    <variation>W</variation>
    <location>
        <position position="88"/>
    </location>
</feature>
<feature type="sequence variant" id="VAR_037783" description="In dbSNP:rs748899150." evidence="4">
    <original>H</original>
    <variation>Q</variation>
    <location>
        <position position="131"/>
    </location>
</feature>
<feature type="sequence variant" id="VAR_037784" description="Impaired response to androstenone and androstadienone; when associated in cis with W-88; dbSNP:rs5020278." evidence="4">
    <original>T</original>
    <variation>M</variation>
    <location>
        <position position="133"/>
    </location>
</feature>
<feature type="sequence variant" id="VAR_037785" description="In dbSNP:rs5020277." evidence="4">
    <original>M</original>
    <variation>I</variation>
    <location>
        <position position="136"/>
    </location>
</feature>
<feature type="sequence variant" id="VAR_037786" description="In dbSNP:rs1310684516." evidence="4">
    <original>C</original>
    <variation>R</variation>
    <location>
        <position position="139"/>
    </location>
</feature>
<feature type="sequence variant" id="VAR_037787" description="In dbSNP:rs1205320769." evidence="4">
    <original>C</original>
    <variation>Y</variation>
    <location>
        <position position="139"/>
    </location>
</feature>
<feature type="sequence variant" id="VAR_037788" description="In dbSNP:rs1321662937." evidence="4">
    <original>L</original>
    <variation>P</variation>
    <location>
        <position position="162"/>
    </location>
</feature>
<feature type="sequence variant" id="VAR_037789" description="In dbSNP:rs138510982." evidence="4">
    <original>A</original>
    <variation>D</variation>
    <location>
        <position position="279"/>
    </location>
</feature>
<feature type="sequence variant" id="VAR_037790" description="In dbSNP:rs4564704." evidence="4">
    <original>L</original>
    <variation>M</variation>
    <location>
        <position position="292"/>
    </location>
</feature>
<protein>
    <recommendedName>
        <fullName>Olfactory receptor 7D4</fullName>
    </recommendedName>
    <alternativeName>
        <fullName>OR19-B</fullName>
    </alternativeName>
    <alternativeName>
        <fullName>Odorant receptor family subfamily D member 4RT</fullName>
    </alternativeName>
    <alternativeName>
        <fullName>Olfactory receptor OR19-7</fullName>
    </alternativeName>
</protein>
<reference key="1">
    <citation type="journal article" date="2007" name="Nature">
        <title>Genetic variation in a human odorant receptor alters odour perception.</title>
        <authorList>
            <person name="Keller A."/>
            <person name="Zhuang H."/>
            <person name="Chi Q."/>
            <person name="Vosshall L.B."/>
            <person name="Matsunami H."/>
        </authorList>
    </citation>
    <scope>NUCLEOTIDE SEQUENCE [GENOMIC DNA]</scope>
    <scope>VARIANTS GLY-52; CYS-75; LEU-79; ASN-84; TRP-88; GLN-131; MET-133; ILE-136; ARG-139; TYR-139; PRO-162; ASP-279 AND MET-292</scope>
</reference>
<reference key="2">
    <citation type="submission" date="2001-07" db="EMBL/GenBank/DDBJ databases">
        <title>Genome-wide discovery and analysis of human seven transmembrane helix receptor genes.</title>
        <authorList>
            <person name="Suwa M."/>
            <person name="Sato T."/>
            <person name="Okouchi I."/>
            <person name="Arita M."/>
            <person name="Futami K."/>
            <person name="Matsumoto S."/>
            <person name="Tsutsumi S."/>
            <person name="Aburatani H."/>
            <person name="Asai K."/>
            <person name="Akiyama Y."/>
        </authorList>
    </citation>
    <scope>NUCLEOTIDE SEQUENCE [GENOMIC DNA]</scope>
</reference>
<reference key="3">
    <citation type="submission" date="2005-07" db="EMBL/GenBank/DDBJ databases">
        <authorList>
            <person name="Mural R.J."/>
            <person name="Istrail S."/>
            <person name="Sutton G.G."/>
            <person name="Florea L."/>
            <person name="Halpern A.L."/>
            <person name="Mobarry C.M."/>
            <person name="Lippert R."/>
            <person name="Walenz B."/>
            <person name="Shatkay H."/>
            <person name="Dew I."/>
            <person name="Miller J.R."/>
            <person name="Flanigan M.J."/>
            <person name="Edwards N.J."/>
            <person name="Bolanos R."/>
            <person name="Fasulo D."/>
            <person name="Halldorsson B.V."/>
            <person name="Hannenhalli S."/>
            <person name="Turner R."/>
            <person name="Yooseph S."/>
            <person name="Lu F."/>
            <person name="Nusskern D.R."/>
            <person name="Shue B.C."/>
            <person name="Zheng X.H."/>
            <person name="Zhong F."/>
            <person name="Delcher A.L."/>
            <person name="Huson D.H."/>
            <person name="Kravitz S.A."/>
            <person name="Mouchard L."/>
            <person name="Reinert K."/>
            <person name="Remington K.A."/>
            <person name="Clark A.G."/>
            <person name="Waterman M.S."/>
            <person name="Eichler E.E."/>
            <person name="Adams M.D."/>
            <person name="Hunkapiller M.W."/>
            <person name="Myers E.W."/>
            <person name="Venter J.C."/>
        </authorList>
    </citation>
    <scope>NUCLEOTIDE SEQUENCE [LARGE SCALE GENOMIC DNA]</scope>
</reference>
<reference key="4">
    <citation type="journal article" date="2004" name="Genome Res.">
        <title>The status, quality, and expansion of the NIH full-length cDNA project: the Mammalian Gene Collection (MGC).</title>
        <authorList>
            <consortium name="The MGC Project Team"/>
        </authorList>
    </citation>
    <scope>NUCLEOTIDE SEQUENCE [LARGE SCALE MRNA]</scope>
    <source>
        <tissue>Testis</tissue>
    </source>
</reference>
<reference key="5">
    <citation type="journal article" date="2004" name="Proc. Natl. Acad. Sci. U.S.A.">
        <title>The human olfactory receptor gene family.</title>
        <authorList>
            <person name="Malnic B."/>
            <person name="Godfrey P.A."/>
            <person name="Buck L.B."/>
        </authorList>
    </citation>
    <scope>IDENTIFICATION</scope>
</reference>
<reference key="6">
    <citation type="journal article" date="2004" name="Proc. Natl. Acad. Sci. U.S.A.">
        <authorList>
            <person name="Malnic B."/>
            <person name="Godfrey P.A."/>
            <person name="Buck L.B."/>
        </authorList>
    </citation>
    <scope>ERRATUM OF PUBMED:14983052</scope>
</reference>
<reference key="7">
    <citation type="journal article" date="2007" name="Genome Biol.">
        <title>Characterizing the expression of the human olfactory receptor gene family using a novel DNA microarray.</title>
        <authorList>
            <person name="Zhang X."/>
            <person name="De la Cruz O."/>
            <person name="Pinto J.M."/>
            <person name="Nicolae D."/>
            <person name="Firestein S."/>
            <person name="Gilad Y."/>
        </authorList>
    </citation>
    <scope>TISSUE SPECIFICITY</scope>
</reference>
<keyword id="KW-1003">Cell membrane</keyword>
<keyword id="KW-1015">Disulfide bond</keyword>
<keyword id="KW-0297">G-protein coupled receptor</keyword>
<keyword id="KW-0325">Glycoprotein</keyword>
<keyword id="KW-0472">Membrane</keyword>
<keyword id="KW-0552">Olfaction</keyword>
<keyword id="KW-0675">Receptor</keyword>
<keyword id="KW-1185">Reference proteome</keyword>
<keyword id="KW-0716">Sensory transduction</keyword>
<keyword id="KW-0807">Transducer</keyword>
<keyword id="KW-0812">Transmembrane</keyword>
<keyword id="KW-1133">Transmembrane helix</keyword>
<accession>Q8NG98</accession>
<accession>A8CAH8</accession>
<accession>A8CAH9</accession>
<accession>A8CAI0</accession>
<accession>A8CAI1</accession>
<accession>B9EH79</accession>
<proteinExistence type="evidence at protein level"/>
<name>OR7D4_HUMAN</name>
<gene>
    <name type="primary">OR7D4</name>
    <name type="synonym">OR7D4P</name>
</gene>
<sequence length="312" mass="34448">MEAENLTELSKFLLLGLSDDPELQPVLFGLFLSMYLVTVLGNLLIILAVSSDSHLHTPMYFFLSNLSFVDICFISTTVPKMLVSIQARSKDISYMGCLTQVYFLMMFAGMDTFLLAVMAYDRFVAICHPLHYTVIMNPCLCGLLVLASWFIIFWFSLVHILLMKRLTFSTGTEIPHFFCEPAQVLKVACSNTLLNNIVLYVATALLGVFPVAGILFSYSQIVSSLMGMSSTKGKYKAFSTCGSHLCVVSLFYGTGLGVYLSSAVTHSSQSSSTASVMYAMVTPMLNPFIYSLRNKDVKGALERLLSRADSCP</sequence>
<comment type="function">
    <text>Odorant receptor. Selectively activated by androstenone and the related odorous steroid androstadienone.</text>
</comment>
<comment type="interaction">
    <interactant intactId="EBI-18164026">
        <id>Q8NG98</id>
    </interactant>
    <interactant intactId="EBI-18159983">
        <id>Q3KNW5</id>
        <label>SLC10A6</label>
    </interactant>
    <organismsDiffer>false</organismsDiffer>
    <experiments>3</experiments>
</comment>
<comment type="interaction">
    <interactant intactId="EBI-18164026">
        <id>Q8NG98</id>
    </interactant>
    <interactant intactId="EBI-11988865">
        <id>A5PKU2</id>
        <label>TUSC5</label>
    </interactant>
    <organismsDiffer>false</organismsDiffer>
    <experiments>3</experiments>
</comment>
<comment type="interaction">
    <interactant intactId="EBI-18164026">
        <id>Q8NG98</id>
    </interactant>
    <interactant intactId="EBI-947187">
        <id>Q9UHD9</id>
        <label>UBQLN2</label>
    </interactant>
    <organismsDiffer>false</organismsDiffer>
    <experiments>3</experiments>
</comment>
<comment type="subcellular location">
    <subcellularLocation>
        <location>Cell membrane</location>
        <topology>Multi-pass membrane protein</topology>
    </subcellularLocation>
</comment>
<comment type="tissue specificity">
    <text evidence="3">Nasal olfactory epithelium.</text>
</comment>
<comment type="similarity">
    <text evidence="2">Belongs to the G-protein coupled receptor 1 family.</text>
</comment>
<comment type="online information" name="Human Olfactory Receptor Data Exploratorium (HORDE)">
    <link uri="http://genome.weizmann.ac.il/horde/card/index/symbol:OR7D4"/>
</comment>
<comment type="online information" name="Protein Spotlight">
    <link uri="https://www.proteinspotlight.org/back_issues/094"/>
    <text>The selfish smell - Issue 94 of May 2008</text>
</comment>